<protein>
    <recommendedName>
        <fullName>Cytochrome b</fullName>
    </recommendedName>
    <alternativeName>
        <fullName>Complex III subunit 3</fullName>
    </alternativeName>
    <alternativeName>
        <fullName>Complex III subunit III</fullName>
    </alternativeName>
    <alternativeName>
        <fullName>Cytochrome b-c1 complex subunit 3</fullName>
    </alternativeName>
    <alternativeName>
        <fullName>Ubiquinol-cytochrome-c reductase complex cytochrome b subunit</fullName>
    </alternativeName>
</protein>
<reference key="1">
    <citation type="journal article" date="1996" name="J. Mammal. Evol.">
        <title>Relationships among didelphid marsupials based on sequence variation in the mitochondrial cytochrome b gene.</title>
        <authorList>
            <person name="Patton J.L."/>
            <person name="dos Reis Maria S.F."/>
            <person name="da Silva N.F."/>
        </authorList>
    </citation>
    <scope>NUCLEOTIDE SEQUENCE [GENOMIC DNA]</scope>
    <source>
        <strain>Isolate MVZ 155245</strain>
    </source>
</reference>
<geneLocation type="mitochondrion"/>
<keyword id="KW-0249">Electron transport</keyword>
<keyword id="KW-0349">Heme</keyword>
<keyword id="KW-0408">Iron</keyword>
<keyword id="KW-0472">Membrane</keyword>
<keyword id="KW-0479">Metal-binding</keyword>
<keyword id="KW-0496">Mitochondrion</keyword>
<keyword id="KW-0999">Mitochondrion inner membrane</keyword>
<keyword id="KW-0679">Respiratory chain</keyword>
<keyword id="KW-0812">Transmembrane</keyword>
<keyword id="KW-1133">Transmembrane helix</keyword>
<keyword id="KW-0813">Transport</keyword>
<keyword id="KW-0830">Ubiquinone</keyword>
<accession>Q35075</accession>
<evidence type="ECO:0000250" key="1"/>
<evidence type="ECO:0000250" key="2">
    <source>
        <dbReference type="UniProtKB" id="P00157"/>
    </source>
</evidence>
<evidence type="ECO:0000255" key="3">
    <source>
        <dbReference type="PROSITE-ProRule" id="PRU00967"/>
    </source>
</evidence>
<evidence type="ECO:0000255" key="4">
    <source>
        <dbReference type="PROSITE-ProRule" id="PRU00968"/>
    </source>
</evidence>
<dbReference type="EMBL" id="U34668">
    <property type="protein sequence ID" value="AAA99758.1"/>
    <property type="molecule type" value="Genomic_DNA"/>
</dbReference>
<dbReference type="SMR" id="Q35075"/>
<dbReference type="GO" id="GO:0005743">
    <property type="term" value="C:mitochondrial inner membrane"/>
    <property type="evidence" value="ECO:0007669"/>
    <property type="project" value="UniProtKB-SubCell"/>
</dbReference>
<dbReference type="GO" id="GO:0045275">
    <property type="term" value="C:respiratory chain complex III"/>
    <property type="evidence" value="ECO:0007669"/>
    <property type="project" value="InterPro"/>
</dbReference>
<dbReference type="GO" id="GO:0046872">
    <property type="term" value="F:metal ion binding"/>
    <property type="evidence" value="ECO:0007669"/>
    <property type="project" value="UniProtKB-KW"/>
</dbReference>
<dbReference type="GO" id="GO:0008121">
    <property type="term" value="F:ubiquinol-cytochrome-c reductase activity"/>
    <property type="evidence" value="ECO:0007669"/>
    <property type="project" value="InterPro"/>
</dbReference>
<dbReference type="GO" id="GO:0006122">
    <property type="term" value="P:mitochondrial electron transport, ubiquinol to cytochrome c"/>
    <property type="evidence" value="ECO:0007669"/>
    <property type="project" value="TreeGrafter"/>
</dbReference>
<dbReference type="CDD" id="cd00290">
    <property type="entry name" value="cytochrome_b_C"/>
    <property type="match status" value="1"/>
</dbReference>
<dbReference type="CDD" id="cd00284">
    <property type="entry name" value="Cytochrome_b_N"/>
    <property type="match status" value="1"/>
</dbReference>
<dbReference type="FunFam" id="1.20.810.10:FF:000002">
    <property type="entry name" value="Cytochrome b"/>
    <property type="match status" value="1"/>
</dbReference>
<dbReference type="Gene3D" id="1.20.810.10">
    <property type="entry name" value="Cytochrome Bc1 Complex, Chain C"/>
    <property type="match status" value="1"/>
</dbReference>
<dbReference type="InterPro" id="IPR005798">
    <property type="entry name" value="Cyt_b/b6_C"/>
</dbReference>
<dbReference type="InterPro" id="IPR036150">
    <property type="entry name" value="Cyt_b/b6_C_sf"/>
</dbReference>
<dbReference type="InterPro" id="IPR005797">
    <property type="entry name" value="Cyt_b/b6_N"/>
</dbReference>
<dbReference type="InterPro" id="IPR027387">
    <property type="entry name" value="Cytb/b6-like_sf"/>
</dbReference>
<dbReference type="InterPro" id="IPR030689">
    <property type="entry name" value="Cytochrome_b"/>
</dbReference>
<dbReference type="InterPro" id="IPR048260">
    <property type="entry name" value="Cytochrome_b_C_euk/bac"/>
</dbReference>
<dbReference type="InterPro" id="IPR048259">
    <property type="entry name" value="Cytochrome_b_N_euk/bac"/>
</dbReference>
<dbReference type="InterPro" id="IPR016174">
    <property type="entry name" value="Di-haem_cyt_TM"/>
</dbReference>
<dbReference type="PANTHER" id="PTHR19271">
    <property type="entry name" value="CYTOCHROME B"/>
    <property type="match status" value="1"/>
</dbReference>
<dbReference type="PANTHER" id="PTHR19271:SF16">
    <property type="entry name" value="CYTOCHROME B"/>
    <property type="match status" value="1"/>
</dbReference>
<dbReference type="Pfam" id="PF00032">
    <property type="entry name" value="Cytochrom_B_C"/>
    <property type="match status" value="1"/>
</dbReference>
<dbReference type="Pfam" id="PF00033">
    <property type="entry name" value="Cytochrome_B"/>
    <property type="match status" value="1"/>
</dbReference>
<dbReference type="PIRSF" id="PIRSF038885">
    <property type="entry name" value="COB"/>
    <property type="match status" value="1"/>
</dbReference>
<dbReference type="SUPFAM" id="SSF81648">
    <property type="entry name" value="a domain/subunit of cytochrome bc1 complex (Ubiquinol-cytochrome c reductase)"/>
    <property type="match status" value="1"/>
</dbReference>
<dbReference type="SUPFAM" id="SSF81342">
    <property type="entry name" value="Transmembrane di-heme cytochromes"/>
    <property type="match status" value="1"/>
</dbReference>
<dbReference type="PROSITE" id="PS51003">
    <property type="entry name" value="CYTB_CTER"/>
    <property type="match status" value="1"/>
</dbReference>
<dbReference type="PROSITE" id="PS51002">
    <property type="entry name" value="CYTB_NTER"/>
    <property type="match status" value="1"/>
</dbReference>
<organism>
    <name type="scientific">Marmosa lepida</name>
    <name type="common">Little rufous mouse opossum</name>
    <dbReference type="NCBI Taxonomy" id="126294"/>
    <lineage>
        <taxon>Eukaryota</taxon>
        <taxon>Metazoa</taxon>
        <taxon>Chordata</taxon>
        <taxon>Craniata</taxon>
        <taxon>Vertebrata</taxon>
        <taxon>Euteleostomi</taxon>
        <taxon>Mammalia</taxon>
        <taxon>Metatheria</taxon>
        <taxon>Didelphimorphia</taxon>
        <taxon>Didelphidae</taxon>
        <taxon>Marmosa</taxon>
        <taxon>Stegomarmosa</taxon>
    </lineage>
</organism>
<gene>
    <name type="primary">MT-CYB</name>
    <name type="synonym">COB</name>
    <name type="synonym">CYTB</name>
    <name type="synonym">MTCYB</name>
</gene>
<proteinExistence type="inferred from homology"/>
<comment type="function">
    <text evidence="2">Component of the ubiquinol-cytochrome c reductase complex (complex III or cytochrome b-c1 complex) that is part of the mitochondrial respiratory chain. The b-c1 complex mediates electron transfer from ubiquinol to cytochrome c. Contributes to the generation of a proton gradient across the mitochondrial membrane that is then used for ATP synthesis.</text>
</comment>
<comment type="cofactor">
    <cofactor evidence="2">
        <name>heme b</name>
        <dbReference type="ChEBI" id="CHEBI:60344"/>
    </cofactor>
    <text evidence="2">Binds 2 heme b groups non-covalently.</text>
</comment>
<comment type="subunit">
    <text evidence="2">The cytochrome bc1 complex contains 11 subunits: 3 respiratory subunits (MT-CYB, CYC1 and UQCRFS1), 2 core proteins (UQCRC1 and UQCRC2) and 6 low-molecular weight proteins (UQCRH/QCR6, UQCRB/QCR7, UQCRQ/QCR8, UQCR10/QCR9, UQCR11/QCR10 and a cleavage product of UQCRFS1). This cytochrome bc1 complex then forms a dimer.</text>
</comment>
<comment type="subcellular location">
    <subcellularLocation>
        <location evidence="2">Mitochondrion inner membrane</location>
        <topology evidence="2">Multi-pass membrane protein</topology>
    </subcellularLocation>
</comment>
<comment type="miscellaneous">
    <text evidence="1">Heme 1 (or BL or b562) is low-potential and absorbs at about 562 nm, and heme 2 (or BH or b566) is high-potential and absorbs at about 566 nm.</text>
</comment>
<comment type="similarity">
    <text evidence="3 4">Belongs to the cytochrome b family.</text>
</comment>
<comment type="caution">
    <text evidence="2">The full-length protein contains only eight transmembrane helices, not nine as predicted by bioinformatics tools.</text>
</comment>
<sequence>MTNLRKTHPIIKIINHSFIDLPTPSNISAWWNFGSLLGICLIIQILTGLFLAMHYTSDTLTAFSSVAHICRDVNYGWLIRNLHANGASMFFMCLFIHVGRGIYYGSYLFKETWNIGVILLLTVMATAFVGYVLPWGQMSFWGATVITNLLSAIPYIGNTLVEWIWGGFSVDKATLTRFFAFHFILPFIIMALAMVHLLFLHETGSNNPTGLNPNSDKIPFHPYYTIKDALGFMLMILVLMTLAMFSPDLLGDPDNFTPANPLNTPPHIKPEWYFLFAYAILRSIPNKLGGVLALLASILVLIIIPLLHMSKQRSLMFRPISQFLFWLLTANLLTLTWIGGQPVEQPFIIIGQLASILYFTLIIVLMPLAGMLEDNMLEPKFP</sequence>
<name>CYB_MARLE</name>
<feature type="chain" id="PRO_0000061156" description="Cytochrome b">
    <location>
        <begin position="1"/>
        <end position="382"/>
    </location>
</feature>
<feature type="transmembrane region" description="Helical" evidence="2">
    <location>
        <begin position="33"/>
        <end position="53"/>
    </location>
</feature>
<feature type="transmembrane region" description="Helical" evidence="2">
    <location>
        <begin position="77"/>
        <end position="98"/>
    </location>
</feature>
<feature type="transmembrane region" description="Helical" evidence="2">
    <location>
        <begin position="113"/>
        <end position="133"/>
    </location>
</feature>
<feature type="transmembrane region" description="Helical" evidence="2">
    <location>
        <begin position="178"/>
        <end position="198"/>
    </location>
</feature>
<feature type="transmembrane region" description="Helical" evidence="2">
    <location>
        <begin position="226"/>
        <end position="246"/>
    </location>
</feature>
<feature type="transmembrane region" description="Helical" evidence="2">
    <location>
        <begin position="288"/>
        <end position="308"/>
    </location>
</feature>
<feature type="transmembrane region" description="Helical" evidence="2">
    <location>
        <begin position="320"/>
        <end position="340"/>
    </location>
</feature>
<feature type="transmembrane region" description="Helical" evidence="2">
    <location>
        <begin position="347"/>
        <end position="367"/>
    </location>
</feature>
<feature type="binding site" description="axial binding residue" evidence="2">
    <location>
        <position position="83"/>
    </location>
    <ligand>
        <name>heme b</name>
        <dbReference type="ChEBI" id="CHEBI:60344"/>
        <label>b562</label>
    </ligand>
    <ligandPart>
        <name>Fe</name>
        <dbReference type="ChEBI" id="CHEBI:18248"/>
    </ligandPart>
</feature>
<feature type="binding site" description="axial binding residue" evidence="2">
    <location>
        <position position="97"/>
    </location>
    <ligand>
        <name>heme b</name>
        <dbReference type="ChEBI" id="CHEBI:60344"/>
        <label>b566</label>
    </ligand>
    <ligandPart>
        <name>Fe</name>
        <dbReference type="ChEBI" id="CHEBI:18248"/>
    </ligandPart>
</feature>
<feature type="binding site" description="axial binding residue" evidence="2">
    <location>
        <position position="182"/>
    </location>
    <ligand>
        <name>heme b</name>
        <dbReference type="ChEBI" id="CHEBI:60344"/>
        <label>b562</label>
    </ligand>
    <ligandPart>
        <name>Fe</name>
        <dbReference type="ChEBI" id="CHEBI:18248"/>
    </ligandPart>
</feature>
<feature type="binding site" description="axial binding residue" evidence="2">
    <location>
        <position position="196"/>
    </location>
    <ligand>
        <name>heme b</name>
        <dbReference type="ChEBI" id="CHEBI:60344"/>
        <label>b566</label>
    </ligand>
    <ligandPart>
        <name>Fe</name>
        <dbReference type="ChEBI" id="CHEBI:18248"/>
    </ligandPart>
</feature>
<feature type="binding site" evidence="2">
    <location>
        <position position="201"/>
    </location>
    <ligand>
        <name>a ubiquinone</name>
        <dbReference type="ChEBI" id="CHEBI:16389"/>
    </ligand>
</feature>